<keyword id="KW-0687">Ribonucleoprotein</keyword>
<keyword id="KW-0689">Ribosomal protein</keyword>
<dbReference type="EMBL" id="CP001638">
    <property type="protein sequence ID" value="ACS23075.1"/>
    <property type="molecule type" value="Genomic_DNA"/>
</dbReference>
<dbReference type="SMR" id="C5D3U1"/>
<dbReference type="STRING" id="471223.GWCH70_0135"/>
<dbReference type="KEGG" id="gwc:GWCH70_0135"/>
<dbReference type="eggNOG" id="COG0257">
    <property type="taxonomic scope" value="Bacteria"/>
</dbReference>
<dbReference type="HOGENOM" id="CLU_135723_6_2_9"/>
<dbReference type="OrthoDB" id="9802520at2"/>
<dbReference type="GO" id="GO:0005737">
    <property type="term" value="C:cytoplasm"/>
    <property type="evidence" value="ECO:0007669"/>
    <property type="project" value="UniProtKB-ARBA"/>
</dbReference>
<dbReference type="GO" id="GO:1990904">
    <property type="term" value="C:ribonucleoprotein complex"/>
    <property type="evidence" value="ECO:0007669"/>
    <property type="project" value="UniProtKB-KW"/>
</dbReference>
<dbReference type="GO" id="GO:0005840">
    <property type="term" value="C:ribosome"/>
    <property type="evidence" value="ECO:0007669"/>
    <property type="project" value="UniProtKB-KW"/>
</dbReference>
<dbReference type="GO" id="GO:0003735">
    <property type="term" value="F:structural constituent of ribosome"/>
    <property type="evidence" value="ECO:0007669"/>
    <property type="project" value="InterPro"/>
</dbReference>
<dbReference type="GO" id="GO:0006412">
    <property type="term" value="P:translation"/>
    <property type="evidence" value="ECO:0007669"/>
    <property type="project" value="UniProtKB-UniRule"/>
</dbReference>
<dbReference type="HAMAP" id="MF_00251">
    <property type="entry name" value="Ribosomal_bL36"/>
    <property type="match status" value="1"/>
</dbReference>
<dbReference type="InterPro" id="IPR000473">
    <property type="entry name" value="Ribosomal_bL36"/>
</dbReference>
<dbReference type="InterPro" id="IPR035977">
    <property type="entry name" value="Ribosomal_bL36_sp"/>
</dbReference>
<dbReference type="NCBIfam" id="TIGR01022">
    <property type="entry name" value="rpmJ_bact"/>
    <property type="match status" value="1"/>
</dbReference>
<dbReference type="PANTHER" id="PTHR42888">
    <property type="entry name" value="50S RIBOSOMAL PROTEIN L36, CHLOROPLASTIC"/>
    <property type="match status" value="1"/>
</dbReference>
<dbReference type="PANTHER" id="PTHR42888:SF1">
    <property type="entry name" value="LARGE RIBOSOMAL SUBUNIT PROTEIN BL36C"/>
    <property type="match status" value="1"/>
</dbReference>
<dbReference type="Pfam" id="PF00444">
    <property type="entry name" value="Ribosomal_L36"/>
    <property type="match status" value="1"/>
</dbReference>
<dbReference type="SUPFAM" id="SSF57840">
    <property type="entry name" value="Ribosomal protein L36"/>
    <property type="match status" value="1"/>
</dbReference>
<dbReference type="PROSITE" id="PS00828">
    <property type="entry name" value="RIBOSOMAL_L36"/>
    <property type="match status" value="1"/>
</dbReference>
<proteinExistence type="inferred from homology"/>
<accession>C5D3U1</accession>
<feature type="chain" id="PRO_1000204553" description="Large ribosomal subunit protein bL36">
    <location>
        <begin position="1"/>
        <end position="37"/>
    </location>
</feature>
<gene>
    <name evidence="1" type="primary">rpmJ</name>
    <name type="ordered locus">GWCH70_0135</name>
</gene>
<organism>
    <name type="scientific">Geobacillus sp. (strain WCH70)</name>
    <dbReference type="NCBI Taxonomy" id="471223"/>
    <lineage>
        <taxon>Bacteria</taxon>
        <taxon>Bacillati</taxon>
        <taxon>Bacillota</taxon>
        <taxon>Bacilli</taxon>
        <taxon>Bacillales</taxon>
        <taxon>Anoxybacillaceae</taxon>
        <taxon>Geobacillus</taxon>
    </lineage>
</organism>
<protein>
    <recommendedName>
        <fullName evidence="1">Large ribosomal subunit protein bL36</fullName>
    </recommendedName>
    <alternativeName>
        <fullName evidence="2">50S ribosomal protein L36</fullName>
    </alternativeName>
</protein>
<name>RL36_GEOSW</name>
<evidence type="ECO:0000255" key="1">
    <source>
        <dbReference type="HAMAP-Rule" id="MF_00251"/>
    </source>
</evidence>
<evidence type="ECO:0000305" key="2"/>
<reference key="1">
    <citation type="submission" date="2009-06" db="EMBL/GenBank/DDBJ databases">
        <title>Complete sequence of chromosome of Geopacillus sp. WCH70.</title>
        <authorList>
            <consortium name="US DOE Joint Genome Institute"/>
            <person name="Lucas S."/>
            <person name="Copeland A."/>
            <person name="Lapidus A."/>
            <person name="Glavina del Rio T."/>
            <person name="Dalin E."/>
            <person name="Tice H."/>
            <person name="Bruce D."/>
            <person name="Goodwin L."/>
            <person name="Pitluck S."/>
            <person name="Chertkov O."/>
            <person name="Brettin T."/>
            <person name="Detter J.C."/>
            <person name="Han C."/>
            <person name="Larimer F."/>
            <person name="Land M."/>
            <person name="Hauser L."/>
            <person name="Kyrpides N."/>
            <person name="Mikhailova N."/>
            <person name="Brumm P."/>
            <person name="Mead D.A."/>
            <person name="Richardson P."/>
        </authorList>
    </citation>
    <scope>NUCLEOTIDE SEQUENCE [LARGE SCALE GENOMIC DNA]</scope>
    <source>
        <strain>WCH70</strain>
    </source>
</reference>
<comment type="similarity">
    <text evidence="1">Belongs to the bacterial ribosomal protein bL36 family.</text>
</comment>
<sequence length="37" mass="4361">MKVRPSVKPICEKCKVIRRRGKVMVICENPKHKQRQG</sequence>